<feature type="chain" id="PRO_0000201807" description="UPF0352 protein YPTB1297">
    <location>
        <begin position="1"/>
        <end position="75"/>
    </location>
</feature>
<name>Y1297_YERPS</name>
<dbReference type="EMBL" id="BX936398">
    <property type="protein sequence ID" value="CAH20537.1"/>
    <property type="molecule type" value="Genomic_DNA"/>
</dbReference>
<dbReference type="RefSeq" id="WP_002208836.1">
    <property type="nucleotide sequence ID" value="NZ_CP009712.1"/>
</dbReference>
<dbReference type="SMR" id="Q66CV5"/>
<dbReference type="KEGG" id="ypo:BZ17_1224"/>
<dbReference type="KEGG" id="yps:YPTB1297"/>
<dbReference type="PATRIC" id="fig|273123.14.peg.1309"/>
<dbReference type="Proteomes" id="UP000001011">
    <property type="component" value="Chromosome"/>
</dbReference>
<dbReference type="Gene3D" id="1.10.3390.10">
    <property type="entry name" value="YejL-like"/>
    <property type="match status" value="1"/>
</dbReference>
<dbReference type="HAMAP" id="MF_00816">
    <property type="entry name" value="UPF0352"/>
    <property type="match status" value="1"/>
</dbReference>
<dbReference type="InterPro" id="IPR009857">
    <property type="entry name" value="UPF0352"/>
</dbReference>
<dbReference type="InterPro" id="IPR023202">
    <property type="entry name" value="YejL_sf"/>
</dbReference>
<dbReference type="NCBIfam" id="NF010242">
    <property type="entry name" value="PRK13689.1"/>
    <property type="match status" value="1"/>
</dbReference>
<dbReference type="Pfam" id="PF07208">
    <property type="entry name" value="DUF1414"/>
    <property type="match status" value="1"/>
</dbReference>
<dbReference type="PIRSF" id="PIRSF006188">
    <property type="entry name" value="UCP006188"/>
    <property type="match status" value="1"/>
</dbReference>
<dbReference type="SUPFAM" id="SSF158651">
    <property type="entry name" value="YejL-like"/>
    <property type="match status" value="1"/>
</dbReference>
<proteinExistence type="inferred from homology"/>
<reference key="1">
    <citation type="journal article" date="2004" name="Proc. Natl. Acad. Sci. U.S.A.">
        <title>Insights into the evolution of Yersinia pestis through whole-genome comparison with Yersinia pseudotuberculosis.</title>
        <authorList>
            <person name="Chain P.S.G."/>
            <person name="Carniel E."/>
            <person name="Larimer F.W."/>
            <person name="Lamerdin J."/>
            <person name="Stoutland P.O."/>
            <person name="Regala W.M."/>
            <person name="Georgescu A.M."/>
            <person name="Vergez L.M."/>
            <person name="Land M.L."/>
            <person name="Motin V.L."/>
            <person name="Brubaker R.R."/>
            <person name="Fowler J."/>
            <person name="Hinnebusch J."/>
            <person name="Marceau M."/>
            <person name="Medigue C."/>
            <person name="Simonet M."/>
            <person name="Chenal-Francisque V."/>
            <person name="Souza B."/>
            <person name="Dacheux D."/>
            <person name="Elliott J.M."/>
            <person name="Derbise A."/>
            <person name="Hauser L.J."/>
            <person name="Garcia E."/>
        </authorList>
    </citation>
    <scope>NUCLEOTIDE SEQUENCE [LARGE SCALE GENOMIC DNA]</scope>
    <source>
        <strain>IP32953</strain>
    </source>
</reference>
<sequence length="75" mass="8360">MPQSSRYSDEHVEQLLSELVSVLEKHRTPTDLSLMVLGNMVTNLINTSIAPAQRKVLARSFAEALQASVREDKAH</sequence>
<gene>
    <name type="ordered locus">YPTB1297</name>
</gene>
<organism>
    <name type="scientific">Yersinia pseudotuberculosis serotype I (strain IP32953)</name>
    <dbReference type="NCBI Taxonomy" id="273123"/>
    <lineage>
        <taxon>Bacteria</taxon>
        <taxon>Pseudomonadati</taxon>
        <taxon>Pseudomonadota</taxon>
        <taxon>Gammaproteobacteria</taxon>
        <taxon>Enterobacterales</taxon>
        <taxon>Yersiniaceae</taxon>
        <taxon>Yersinia</taxon>
    </lineage>
</organism>
<protein>
    <recommendedName>
        <fullName evidence="1">UPF0352 protein YPTB1297</fullName>
    </recommendedName>
</protein>
<comment type="similarity">
    <text evidence="1">Belongs to the UPF0352 family.</text>
</comment>
<evidence type="ECO:0000255" key="1">
    <source>
        <dbReference type="HAMAP-Rule" id="MF_00816"/>
    </source>
</evidence>
<accession>Q66CV5</accession>